<organism>
    <name type="scientific">Debaryomyces hansenii (strain ATCC 36239 / CBS 767 / BCRC 21394 / JCM 1990 / NBRC 0083 / IGC 2968)</name>
    <name type="common">Yeast</name>
    <name type="synonym">Torulaspora hansenii</name>
    <dbReference type="NCBI Taxonomy" id="284592"/>
    <lineage>
        <taxon>Eukaryota</taxon>
        <taxon>Fungi</taxon>
        <taxon>Dikarya</taxon>
        <taxon>Ascomycota</taxon>
        <taxon>Saccharomycotina</taxon>
        <taxon>Pichiomycetes</taxon>
        <taxon>Debaryomycetaceae</taxon>
        <taxon>Debaryomyces</taxon>
    </lineage>
</organism>
<dbReference type="EMBL" id="CR382135">
    <property type="protein sequence ID" value="CAG86327.2"/>
    <property type="molecule type" value="Genomic_DNA"/>
</dbReference>
<dbReference type="RefSeq" id="XP_458251.2">
    <property type="nucleotide sequence ID" value="XM_458251.1"/>
</dbReference>
<dbReference type="SMR" id="Q6BU68"/>
<dbReference type="STRING" id="284592.Q6BU68"/>
<dbReference type="GeneID" id="2900084"/>
<dbReference type="KEGG" id="dha:DEHA2C13178g"/>
<dbReference type="VEuPathDB" id="FungiDB:DEHA2C13178g"/>
<dbReference type="eggNOG" id="ENOG502QWEK">
    <property type="taxonomic scope" value="Eukaryota"/>
</dbReference>
<dbReference type="HOGENOM" id="CLU_553323_0_0_1"/>
<dbReference type="InParanoid" id="Q6BU68"/>
<dbReference type="OMA" id="YMEQMVL"/>
<dbReference type="OrthoDB" id="4074002at2759"/>
<dbReference type="Proteomes" id="UP000000599">
    <property type="component" value="Chromosome C"/>
</dbReference>
<dbReference type="GO" id="GO:0005737">
    <property type="term" value="C:cytoplasm"/>
    <property type="evidence" value="ECO:0007669"/>
    <property type="project" value="UniProtKB-SubCell"/>
</dbReference>
<dbReference type="GO" id="GO:0006281">
    <property type="term" value="P:DNA repair"/>
    <property type="evidence" value="ECO:0007669"/>
    <property type="project" value="UniProtKB-KW"/>
</dbReference>
<dbReference type="CDD" id="cd12794">
    <property type="entry name" value="Hsm3_like"/>
    <property type="match status" value="1"/>
</dbReference>
<dbReference type="Gene3D" id="1.25.10.50">
    <property type="match status" value="1"/>
</dbReference>
<dbReference type="Gene3D" id="1.25.40.580">
    <property type="match status" value="1"/>
</dbReference>
<dbReference type="InterPro" id="IPR040752">
    <property type="entry name" value="HSM3_C"/>
</dbReference>
<dbReference type="InterPro" id="IPR041335">
    <property type="entry name" value="HSM3_N"/>
</dbReference>
<dbReference type="Pfam" id="PF18794">
    <property type="entry name" value="HSM3_C"/>
    <property type="match status" value="1"/>
</dbReference>
<dbReference type="Pfam" id="PF18795">
    <property type="entry name" value="HSM3_N"/>
    <property type="match status" value="1"/>
</dbReference>
<keyword id="KW-0143">Chaperone</keyword>
<keyword id="KW-0963">Cytoplasm</keyword>
<keyword id="KW-0227">DNA damage</keyword>
<keyword id="KW-0234">DNA repair</keyword>
<keyword id="KW-1185">Reference proteome</keyword>
<reference key="1">
    <citation type="journal article" date="2004" name="Nature">
        <title>Genome evolution in yeasts.</title>
        <authorList>
            <person name="Dujon B."/>
            <person name="Sherman D."/>
            <person name="Fischer G."/>
            <person name="Durrens P."/>
            <person name="Casaregola S."/>
            <person name="Lafontaine I."/>
            <person name="de Montigny J."/>
            <person name="Marck C."/>
            <person name="Neuveglise C."/>
            <person name="Talla E."/>
            <person name="Goffard N."/>
            <person name="Frangeul L."/>
            <person name="Aigle M."/>
            <person name="Anthouard V."/>
            <person name="Babour A."/>
            <person name="Barbe V."/>
            <person name="Barnay S."/>
            <person name="Blanchin S."/>
            <person name="Beckerich J.-M."/>
            <person name="Beyne E."/>
            <person name="Bleykasten C."/>
            <person name="Boisrame A."/>
            <person name="Boyer J."/>
            <person name="Cattolico L."/>
            <person name="Confanioleri F."/>
            <person name="de Daruvar A."/>
            <person name="Despons L."/>
            <person name="Fabre E."/>
            <person name="Fairhead C."/>
            <person name="Ferry-Dumazet H."/>
            <person name="Groppi A."/>
            <person name="Hantraye F."/>
            <person name="Hennequin C."/>
            <person name="Jauniaux N."/>
            <person name="Joyet P."/>
            <person name="Kachouri R."/>
            <person name="Kerrest A."/>
            <person name="Koszul R."/>
            <person name="Lemaire M."/>
            <person name="Lesur I."/>
            <person name="Ma L."/>
            <person name="Muller H."/>
            <person name="Nicaud J.-M."/>
            <person name="Nikolski M."/>
            <person name="Oztas S."/>
            <person name="Ozier-Kalogeropoulos O."/>
            <person name="Pellenz S."/>
            <person name="Potier S."/>
            <person name="Richard G.-F."/>
            <person name="Straub M.-L."/>
            <person name="Suleau A."/>
            <person name="Swennen D."/>
            <person name="Tekaia F."/>
            <person name="Wesolowski-Louvel M."/>
            <person name="Westhof E."/>
            <person name="Wirth B."/>
            <person name="Zeniou-Meyer M."/>
            <person name="Zivanovic Y."/>
            <person name="Bolotin-Fukuhara M."/>
            <person name="Thierry A."/>
            <person name="Bouchier C."/>
            <person name="Caudron B."/>
            <person name="Scarpelli C."/>
            <person name="Gaillardin C."/>
            <person name="Weissenbach J."/>
            <person name="Wincker P."/>
            <person name="Souciet J.-L."/>
        </authorList>
    </citation>
    <scope>NUCLEOTIDE SEQUENCE [LARGE SCALE GENOMIC DNA]</scope>
    <source>
        <strain>ATCC 36239 / CBS 767 / BCRC 21394 / JCM 1990 / NBRC 0083 / IGC 2968</strain>
    </source>
</reference>
<accession>Q6BU68</accession>
<name>HSM3_DEBHA</name>
<protein>
    <recommendedName>
        <fullName>DNA mismatch repair protein HSM3</fullName>
    </recommendedName>
</protein>
<sequence>MDYNGIDSSSVKTHVHLNEILNNDKVVNATLIENYILQLKNNRSIIFPDEQPNGSIGSNKFISLFIPTINSLLNGEHYFEIDPERVVISLLDAILAYLNIEEILSLYPLDFIINGLTGDSAICCMIIRLLRNNATSETTVKLFDETAILDTILSRYFEKNTTLNVVSQVELLISELVDLSSTVVSTKLLSTEFRDLYEHARDNEDKLVKFLDYILLLMPYILEKQFDLPKNYYVLSYSEFYENDDVLQVVLFIQFYSKLIQRINTFGNDTNIIHNIKPCLKDLISYFKTRQNDDIVQSFYANDIVDVLFHVSYSKVPELLTFNEEVVGQYELFKSYNLFLHLDCDIKLLSTFNPRALPLEIIEDILQEISIFNQKYFSILLNCIGSENVFNKLIPRLTTSVIGKLSFDMLYSLLLRMSEFEYSRKHLINGMPNIVSDYLANPPNVSESEIWNLKKDTLQNLLFSNTDLNVWHDPISKNFSLMCNGRKVQDILPQVDIADKSLQ</sequence>
<feature type="chain" id="PRO_0000301758" description="DNA mismatch repair protein HSM3">
    <location>
        <begin position="1"/>
        <end position="503"/>
    </location>
</feature>
<evidence type="ECO:0000250" key="1"/>
<evidence type="ECO:0000305" key="2"/>
<gene>
    <name type="primary">HSM3</name>
    <name type="ordered locus">DEHA2C13178g</name>
</gene>
<comment type="function">
    <text evidence="1">Involved in DNA mismatch repair in slow-growing cells. Acts as a chaperone during the assembly of the 26S proteasome, specifically of the base subcomplex of the 19S regulatory complex (RC) (By similarity).</text>
</comment>
<comment type="subcellular location">
    <subcellularLocation>
        <location evidence="1">Cytoplasm</location>
    </subcellularLocation>
</comment>
<comment type="similarity">
    <text evidence="2">Belongs to the proteasome subunit S5B/HSM3 family.</text>
</comment>
<proteinExistence type="inferred from homology"/>